<protein>
    <recommendedName>
        <fullName>Conotoxin Vc6.3</fullName>
    </recommendedName>
</protein>
<dbReference type="ConoServer" id="1427">
    <property type="toxin name" value="Vc6.3 precursor"/>
</dbReference>
<dbReference type="GO" id="GO:0005576">
    <property type="term" value="C:extracellular region"/>
    <property type="evidence" value="ECO:0007669"/>
    <property type="project" value="UniProtKB-SubCell"/>
</dbReference>
<dbReference type="GO" id="GO:0008200">
    <property type="term" value="F:ion channel inhibitor activity"/>
    <property type="evidence" value="ECO:0007669"/>
    <property type="project" value="InterPro"/>
</dbReference>
<dbReference type="GO" id="GO:0090729">
    <property type="term" value="F:toxin activity"/>
    <property type="evidence" value="ECO:0007669"/>
    <property type="project" value="UniProtKB-KW"/>
</dbReference>
<dbReference type="InterPro" id="IPR004214">
    <property type="entry name" value="Conotoxin"/>
</dbReference>
<dbReference type="Pfam" id="PF02950">
    <property type="entry name" value="Conotoxin"/>
    <property type="match status" value="1"/>
</dbReference>
<evidence type="ECO:0000250" key="1"/>
<evidence type="ECO:0000255" key="2"/>
<evidence type="ECO:0000305" key="3"/>
<accession>P69760</accession>
<name>O163_CONVC</name>
<reference key="1">
    <citation type="journal article" date="2004" name="J. Mass Spectrom.">
        <title>Determining sequences and post-translational modifications of novel conotoxins in Conus victoriae using cDNA sequencing and mass spectrometry.</title>
        <authorList>
            <person name="Jakubowski J.A."/>
            <person name="Keays D.A."/>
            <person name="Kelley W.P."/>
            <person name="Sandall D.W."/>
            <person name="Bingham J.-P."/>
            <person name="Livett B.G."/>
            <person name="Gayler K.R."/>
            <person name="Sweedler J.V."/>
        </authorList>
    </citation>
    <scope>NUCLEOTIDE SEQUENCE [MRNA]</scope>
    <source>
        <tissue>Venom duct</tissue>
    </source>
</reference>
<proteinExistence type="evidence at transcript level"/>
<feature type="signal peptide" evidence="2">
    <location>
        <begin position="1"/>
        <end position="22"/>
    </location>
</feature>
<feature type="propeptide" id="PRO_0000034970" evidence="1">
    <location>
        <begin position="23"/>
        <end position="50"/>
    </location>
</feature>
<feature type="peptide" id="PRO_0000034971" description="Conotoxin Vc6.3">
    <location>
        <begin position="52"/>
        <end position="76"/>
    </location>
</feature>
<feature type="disulfide bond" evidence="1">
    <location>
        <begin position="52"/>
        <end position="66"/>
    </location>
</feature>
<feature type="disulfide bond" evidence="1">
    <location>
        <begin position="59"/>
        <end position="70"/>
    </location>
</feature>
<feature type="disulfide bond" evidence="1">
    <location>
        <begin position="67"/>
        <end position="75"/>
    </location>
</feature>
<organism>
    <name type="scientific">Conus victoriae</name>
    <name type="common">Queen Victoria cone</name>
    <dbReference type="NCBI Taxonomy" id="319920"/>
    <lineage>
        <taxon>Eukaryota</taxon>
        <taxon>Metazoa</taxon>
        <taxon>Spiralia</taxon>
        <taxon>Lophotrochozoa</taxon>
        <taxon>Mollusca</taxon>
        <taxon>Gastropoda</taxon>
        <taxon>Caenogastropoda</taxon>
        <taxon>Neogastropoda</taxon>
        <taxon>Conoidea</taxon>
        <taxon>Conidae</taxon>
        <taxon>Conus</taxon>
        <taxon>Cylinder</taxon>
    </lineage>
</organism>
<sequence>MKLTCVMIVAVLFLTANTFATADDPRNGLRDLFSIAHHEMKNPEASKLNEKCYGFGEACLVLYTDCCGYCVLAVCL</sequence>
<keyword id="KW-1015">Disulfide bond</keyword>
<keyword id="KW-0872">Ion channel impairing toxin</keyword>
<keyword id="KW-0960">Knottin</keyword>
<keyword id="KW-0528">Neurotoxin</keyword>
<keyword id="KW-0964">Secreted</keyword>
<keyword id="KW-0732">Signal</keyword>
<keyword id="KW-0800">Toxin</keyword>
<comment type="subcellular location">
    <subcellularLocation>
        <location evidence="1">Secreted</location>
    </subcellularLocation>
</comment>
<comment type="tissue specificity">
    <text>Expressed by the venom duct.</text>
</comment>
<comment type="domain">
    <text evidence="1">The presence of a 'disulfide through disulfide knot' structurally defines this protein as a knottin.</text>
</comment>
<comment type="domain">
    <text>The cysteine framework is VI/VII (C-C-CC-C-C).</text>
</comment>
<comment type="similarity">
    <text evidence="3">Belongs to the conotoxin O1 superfamily.</text>
</comment>